<reference key="1">
    <citation type="journal article" date="2004" name="Proc. Natl. Acad. Sci. U.S.A.">
        <title>Genomic plasticity of the causative agent of melioidosis, Burkholderia pseudomallei.</title>
        <authorList>
            <person name="Holden M.T.G."/>
            <person name="Titball R.W."/>
            <person name="Peacock S.J."/>
            <person name="Cerdeno-Tarraga A.-M."/>
            <person name="Atkins T."/>
            <person name="Crossman L.C."/>
            <person name="Pitt T."/>
            <person name="Churcher C."/>
            <person name="Mungall K.L."/>
            <person name="Bentley S.D."/>
            <person name="Sebaihia M."/>
            <person name="Thomson N.R."/>
            <person name="Bason N."/>
            <person name="Beacham I.R."/>
            <person name="Brooks K."/>
            <person name="Brown K.A."/>
            <person name="Brown N.F."/>
            <person name="Challis G.L."/>
            <person name="Cherevach I."/>
            <person name="Chillingworth T."/>
            <person name="Cronin A."/>
            <person name="Crossett B."/>
            <person name="Davis P."/>
            <person name="DeShazer D."/>
            <person name="Feltwell T."/>
            <person name="Fraser A."/>
            <person name="Hance Z."/>
            <person name="Hauser H."/>
            <person name="Holroyd S."/>
            <person name="Jagels K."/>
            <person name="Keith K.E."/>
            <person name="Maddison M."/>
            <person name="Moule S."/>
            <person name="Price C."/>
            <person name="Quail M.A."/>
            <person name="Rabbinowitsch E."/>
            <person name="Rutherford K."/>
            <person name="Sanders M."/>
            <person name="Simmonds M."/>
            <person name="Songsivilai S."/>
            <person name="Stevens K."/>
            <person name="Tumapa S."/>
            <person name="Vesaratchavest M."/>
            <person name="Whitehead S."/>
            <person name="Yeats C."/>
            <person name="Barrell B.G."/>
            <person name="Oyston P.C.F."/>
            <person name="Parkhill J."/>
        </authorList>
    </citation>
    <scope>NUCLEOTIDE SEQUENCE [LARGE SCALE GENOMIC DNA]</scope>
    <source>
        <strain>K96243</strain>
    </source>
</reference>
<dbReference type="EC" id="2.8.4.4" evidence="1"/>
<dbReference type="EMBL" id="BX571965">
    <property type="protein sequence ID" value="CAH35539.1"/>
    <property type="molecule type" value="Genomic_DNA"/>
</dbReference>
<dbReference type="RefSeq" id="YP_108158.1">
    <property type="nucleotide sequence ID" value="NC_006350.1"/>
</dbReference>
<dbReference type="SMR" id="Q63UQ8"/>
<dbReference type="STRING" id="272560.BPSL1538"/>
<dbReference type="KEGG" id="bps:BPSL1538"/>
<dbReference type="PATRIC" id="fig|272560.6.peg.1729"/>
<dbReference type="eggNOG" id="COG0621">
    <property type="taxonomic scope" value="Bacteria"/>
</dbReference>
<dbReference type="Proteomes" id="UP000000605">
    <property type="component" value="Chromosome 1"/>
</dbReference>
<dbReference type="GO" id="GO:0005829">
    <property type="term" value="C:cytosol"/>
    <property type="evidence" value="ECO:0007669"/>
    <property type="project" value="TreeGrafter"/>
</dbReference>
<dbReference type="GO" id="GO:0051539">
    <property type="term" value="F:4 iron, 4 sulfur cluster binding"/>
    <property type="evidence" value="ECO:0007669"/>
    <property type="project" value="UniProtKB-UniRule"/>
</dbReference>
<dbReference type="GO" id="GO:0035599">
    <property type="term" value="F:aspartic acid methylthiotransferase activity"/>
    <property type="evidence" value="ECO:0007669"/>
    <property type="project" value="TreeGrafter"/>
</dbReference>
<dbReference type="GO" id="GO:0046872">
    <property type="term" value="F:metal ion binding"/>
    <property type="evidence" value="ECO:0007669"/>
    <property type="project" value="UniProtKB-KW"/>
</dbReference>
<dbReference type="GO" id="GO:0103039">
    <property type="term" value="F:protein methylthiotransferase activity"/>
    <property type="evidence" value="ECO:0007669"/>
    <property type="project" value="UniProtKB-EC"/>
</dbReference>
<dbReference type="GO" id="GO:0006400">
    <property type="term" value="P:tRNA modification"/>
    <property type="evidence" value="ECO:0007669"/>
    <property type="project" value="InterPro"/>
</dbReference>
<dbReference type="CDD" id="cd01335">
    <property type="entry name" value="Radical_SAM"/>
    <property type="match status" value="1"/>
</dbReference>
<dbReference type="FunFam" id="3.40.50.12160:FF:000002">
    <property type="entry name" value="Ribosomal protein S12 methylthiotransferase RimO"/>
    <property type="match status" value="1"/>
</dbReference>
<dbReference type="FunFam" id="3.80.30.20:FF:000001">
    <property type="entry name" value="tRNA-2-methylthio-N(6)-dimethylallyladenosine synthase 2"/>
    <property type="match status" value="1"/>
</dbReference>
<dbReference type="Gene3D" id="3.40.50.12160">
    <property type="entry name" value="Methylthiotransferase, N-terminal domain"/>
    <property type="match status" value="1"/>
</dbReference>
<dbReference type="Gene3D" id="2.40.50.140">
    <property type="entry name" value="Nucleic acid-binding proteins"/>
    <property type="match status" value="1"/>
</dbReference>
<dbReference type="Gene3D" id="3.80.30.20">
    <property type="entry name" value="tm_1862 like domain"/>
    <property type="match status" value="1"/>
</dbReference>
<dbReference type="HAMAP" id="MF_01865">
    <property type="entry name" value="MTTase_RimO"/>
    <property type="match status" value="1"/>
</dbReference>
<dbReference type="InterPro" id="IPR006638">
    <property type="entry name" value="Elp3/MiaA/NifB-like_rSAM"/>
</dbReference>
<dbReference type="InterPro" id="IPR005839">
    <property type="entry name" value="Methylthiotransferase"/>
</dbReference>
<dbReference type="InterPro" id="IPR020612">
    <property type="entry name" value="Methylthiotransferase_CS"/>
</dbReference>
<dbReference type="InterPro" id="IPR013848">
    <property type="entry name" value="Methylthiotransferase_N"/>
</dbReference>
<dbReference type="InterPro" id="IPR038135">
    <property type="entry name" value="Methylthiotransferase_N_sf"/>
</dbReference>
<dbReference type="InterPro" id="IPR012340">
    <property type="entry name" value="NA-bd_OB-fold"/>
</dbReference>
<dbReference type="InterPro" id="IPR005840">
    <property type="entry name" value="Ribosomal_uS12_MeSTrfase_RimO"/>
</dbReference>
<dbReference type="InterPro" id="IPR007197">
    <property type="entry name" value="rSAM"/>
</dbReference>
<dbReference type="InterPro" id="IPR023404">
    <property type="entry name" value="rSAM_horseshoe"/>
</dbReference>
<dbReference type="InterPro" id="IPR002792">
    <property type="entry name" value="TRAM_dom"/>
</dbReference>
<dbReference type="NCBIfam" id="TIGR01125">
    <property type="entry name" value="30S ribosomal protein S12 methylthiotransferase RimO"/>
    <property type="match status" value="1"/>
</dbReference>
<dbReference type="NCBIfam" id="TIGR00089">
    <property type="entry name" value="MiaB/RimO family radical SAM methylthiotransferase"/>
    <property type="match status" value="1"/>
</dbReference>
<dbReference type="PANTHER" id="PTHR43837">
    <property type="entry name" value="RIBOSOMAL PROTEIN S12 METHYLTHIOTRANSFERASE RIMO"/>
    <property type="match status" value="1"/>
</dbReference>
<dbReference type="PANTHER" id="PTHR43837:SF1">
    <property type="entry name" value="RIBOSOMAL PROTEIN US12 METHYLTHIOTRANSFERASE RIMO"/>
    <property type="match status" value="1"/>
</dbReference>
<dbReference type="Pfam" id="PF04055">
    <property type="entry name" value="Radical_SAM"/>
    <property type="match status" value="1"/>
</dbReference>
<dbReference type="Pfam" id="PF18693">
    <property type="entry name" value="TRAM_2"/>
    <property type="match status" value="1"/>
</dbReference>
<dbReference type="Pfam" id="PF00919">
    <property type="entry name" value="UPF0004"/>
    <property type="match status" value="1"/>
</dbReference>
<dbReference type="SFLD" id="SFLDG01082">
    <property type="entry name" value="B12-binding_domain_containing"/>
    <property type="match status" value="1"/>
</dbReference>
<dbReference type="SFLD" id="SFLDG01061">
    <property type="entry name" value="methylthiotransferase"/>
    <property type="match status" value="1"/>
</dbReference>
<dbReference type="SFLD" id="SFLDF00274">
    <property type="entry name" value="ribosomal_protein_S12_methylth"/>
    <property type="match status" value="1"/>
</dbReference>
<dbReference type="SMART" id="SM00729">
    <property type="entry name" value="Elp3"/>
    <property type="match status" value="1"/>
</dbReference>
<dbReference type="SUPFAM" id="SSF102114">
    <property type="entry name" value="Radical SAM enzymes"/>
    <property type="match status" value="1"/>
</dbReference>
<dbReference type="PROSITE" id="PS51449">
    <property type="entry name" value="MTTASE_N"/>
    <property type="match status" value="1"/>
</dbReference>
<dbReference type="PROSITE" id="PS01278">
    <property type="entry name" value="MTTASE_RADICAL"/>
    <property type="match status" value="1"/>
</dbReference>
<dbReference type="PROSITE" id="PS51918">
    <property type="entry name" value="RADICAL_SAM"/>
    <property type="match status" value="1"/>
</dbReference>
<dbReference type="PROSITE" id="PS50926">
    <property type="entry name" value="TRAM"/>
    <property type="match status" value="1"/>
</dbReference>
<accession>Q63UQ8</accession>
<organism>
    <name type="scientific">Burkholderia pseudomallei (strain K96243)</name>
    <dbReference type="NCBI Taxonomy" id="272560"/>
    <lineage>
        <taxon>Bacteria</taxon>
        <taxon>Pseudomonadati</taxon>
        <taxon>Pseudomonadota</taxon>
        <taxon>Betaproteobacteria</taxon>
        <taxon>Burkholderiales</taxon>
        <taxon>Burkholderiaceae</taxon>
        <taxon>Burkholderia</taxon>
        <taxon>pseudomallei group</taxon>
    </lineage>
</organism>
<proteinExistence type="inferred from homology"/>
<evidence type="ECO:0000255" key="1">
    <source>
        <dbReference type="HAMAP-Rule" id="MF_01865"/>
    </source>
</evidence>
<evidence type="ECO:0000255" key="2">
    <source>
        <dbReference type="PROSITE-ProRule" id="PRU01266"/>
    </source>
</evidence>
<name>RIMO_BURPS</name>
<sequence>MKSSGKPLAAPKVGMVSLGCPKALVDSEQIITQLRAEGYEISGTYDGADLVVVNTCGFIDEAVQESLDAIGEALAENGKVIVTGCLGAKKSASGSGLIAEVHPKVLAVTGPHAVGEVMQAVHSHLPKPHDPFVDLVPAAGIKLTPRHYAYLKISEGCNHRCSFCIIPSMRGELVSRPVAEVMLEAENLFKSGVKELLVISQDTSAYGVDVKYRTGFWNGRPLKTRMTELVGALGELAAQYGAWVRLHYVYPYPHVDEIIPMMAQGPLKGHVLPYLDVPFQHAHPEVLKRMKRPANAERVLERVQKWREICPDLTIRSTFIAGFPGETDAQFETLLDFIREAELDRVGCFAYSPVEGASANALDGALPDDVREARRARFMEVAEEVSAARIARKVGKTLKVLIDEVNAEGGIGRTAADAPEIDGVVYVEPAAKASKRYKVGEFVSVKITGADGHDLWGEV</sequence>
<feature type="chain" id="PRO_0000374741" description="Ribosomal protein uS12 methylthiotransferase RimO">
    <location>
        <begin position="1"/>
        <end position="459"/>
    </location>
</feature>
<feature type="domain" description="MTTase N-terminal" evidence="1">
    <location>
        <begin position="11"/>
        <end position="126"/>
    </location>
</feature>
<feature type="domain" description="Radical SAM core" evidence="2">
    <location>
        <begin position="143"/>
        <end position="388"/>
    </location>
</feature>
<feature type="domain" description="TRAM" evidence="1">
    <location>
        <begin position="391"/>
        <end position="459"/>
    </location>
</feature>
<feature type="binding site" evidence="1">
    <location>
        <position position="20"/>
    </location>
    <ligand>
        <name>[4Fe-4S] cluster</name>
        <dbReference type="ChEBI" id="CHEBI:49883"/>
        <label>1</label>
    </ligand>
</feature>
<feature type="binding site" evidence="1">
    <location>
        <position position="56"/>
    </location>
    <ligand>
        <name>[4Fe-4S] cluster</name>
        <dbReference type="ChEBI" id="CHEBI:49883"/>
        <label>1</label>
    </ligand>
</feature>
<feature type="binding site" evidence="1">
    <location>
        <position position="85"/>
    </location>
    <ligand>
        <name>[4Fe-4S] cluster</name>
        <dbReference type="ChEBI" id="CHEBI:49883"/>
        <label>1</label>
    </ligand>
</feature>
<feature type="binding site" evidence="1">
    <location>
        <position position="157"/>
    </location>
    <ligand>
        <name>[4Fe-4S] cluster</name>
        <dbReference type="ChEBI" id="CHEBI:49883"/>
        <label>2</label>
        <note>4Fe-4S-S-AdoMet</note>
    </ligand>
</feature>
<feature type="binding site" evidence="1">
    <location>
        <position position="161"/>
    </location>
    <ligand>
        <name>[4Fe-4S] cluster</name>
        <dbReference type="ChEBI" id="CHEBI:49883"/>
        <label>2</label>
        <note>4Fe-4S-S-AdoMet</note>
    </ligand>
</feature>
<feature type="binding site" evidence="1">
    <location>
        <position position="164"/>
    </location>
    <ligand>
        <name>[4Fe-4S] cluster</name>
        <dbReference type="ChEBI" id="CHEBI:49883"/>
        <label>2</label>
        <note>4Fe-4S-S-AdoMet</note>
    </ligand>
</feature>
<comment type="function">
    <text evidence="1">Catalyzes the methylthiolation of an aspartic acid residue of ribosomal protein uS12.</text>
</comment>
<comment type="catalytic activity">
    <reaction evidence="1">
        <text>L-aspartate(89)-[ribosomal protein uS12]-hydrogen + (sulfur carrier)-SH + AH2 + 2 S-adenosyl-L-methionine = 3-methylsulfanyl-L-aspartate(89)-[ribosomal protein uS12]-hydrogen + (sulfur carrier)-H + 5'-deoxyadenosine + L-methionine + A + S-adenosyl-L-homocysteine + 2 H(+)</text>
        <dbReference type="Rhea" id="RHEA:37087"/>
        <dbReference type="Rhea" id="RHEA-COMP:10460"/>
        <dbReference type="Rhea" id="RHEA-COMP:10461"/>
        <dbReference type="Rhea" id="RHEA-COMP:14737"/>
        <dbReference type="Rhea" id="RHEA-COMP:14739"/>
        <dbReference type="ChEBI" id="CHEBI:13193"/>
        <dbReference type="ChEBI" id="CHEBI:15378"/>
        <dbReference type="ChEBI" id="CHEBI:17319"/>
        <dbReference type="ChEBI" id="CHEBI:17499"/>
        <dbReference type="ChEBI" id="CHEBI:29917"/>
        <dbReference type="ChEBI" id="CHEBI:29961"/>
        <dbReference type="ChEBI" id="CHEBI:57844"/>
        <dbReference type="ChEBI" id="CHEBI:57856"/>
        <dbReference type="ChEBI" id="CHEBI:59789"/>
        <dbReference type="ChEBI" id="CHEBI:64428"/>
        <dbReference type="ChEBI" id="CHEBI:73599"/>
        <dbReference type="EC" id="2.8.4.4"/>
    </reaction>
</comment>
<comment type="cofactor">
    <cofactor evidence="1">
        <name>[4Fe-4S] cluster</name>
        <dbReference type="ChEBI" id="CHEBI:49883"/>
    </cofactor>
    <text evidence="1">Binds 2 [4Fe-4S] clusters. One cluster is coordinated with 3 cysteines and an exchangeable S-adenosyl-L-methionine.</text>
</comment>
<comment type="subcellular location">
    <subcellularLocation>
        <location evidence="1">Cytoplasm</location>
    </subcellularLocation>
</comment>
<comment type="similarity">
    <text evidence="1">Belongs to the methylthiotransferase family. RimO subfamily.</text>
</comment>
<keyword id="KW-0004">4Fe-4S</keyword>
<keyword id="KW-0963">Cytoplasm</keyword>
<keyword id="KW-0408">Iron</keyword>
<keyword id="KW-0411">Iron-sulfur</keyword>
<keyword id="KW-0479">Metal-binding</keyword>
<keyword id="KW-1185">Reference proteome</keyword>
<keyword id="KW-0949">S-adenosyl-L-methionine</keyword>
<keyword id="KW-0808">Transferase</keyword>
<protein>
    <recommendedName>
        <fullName evidence="1">Ribosomal protein uS12 methylthiotransferase RimO</fullName>
        <shortName evidence="1">uS12 MTTase</shortName>
        <shortName evidence="1">uS12 methylthiotransferase</shortName>
        <ecNumber evidence="1">2.8.4.4</ecNumber>
    </recommendedName>
    <alternativeName>
        <fullName evidence="1">Ribosomal protein uS12 (aspartate-C(3))-methylthiotransferase</fullName>
    </alternativeName>
    <alternativeName>
        <fullName evidence="1">Ribosome maturation factor RimO</fullName>
    </alternativeName>
</protein>
<gene>
    <name evidence="1" type="primary">rimO</name>
    <name type="ordered locus">BPSL1538</name>
</gene>